<dbReference type="EMBL" id="CU928163">
    <property type="protein sequence ID" value="CAR14932.1"/>
    <property type="molecule type" value="Genomic_DNA"/>
</dbReference>
<dbReference type="RefSeq" id="WP_000130100.1">
    <property type="nucleotide sequence ID" value="NC_011751.1"/>
</dbReference>
<dbReference type="RefSeq" id="YP_002414437.1">
    <property type="nucleotide sequence ID" value="NC_011751.1"/>
</dbReference>
<dbReference type="SMR" id="B7NDT2"/>
<dbReference type="STRING" id="585056.ECUMN_3784"/>
<dbReference type="GeneID" id="93778676"/>
<dbReference type="KEGG" id="eum:ECUMN_3784"/>
<dbReference type="PATRIC" id="fig|585056.7.peg.3959"/>
<dbReference type="HOGENOM" id="CLU_073626_1_1_6"/>
<dbReference type="PRO" id="PR:B7NDT2"/>
<dbReference type="Proteomes" id="UP000007097">
    <property type="component" value="Chromosome"/>
</dbReference>
<dbReference type="GO" id="GO:0022627">
    <property type="term" value="C:cytosolic small ribosomal subunit"/>
    <property type="evidence" value="ECO:0007669"/>
    <property type="project" value="TreeGrafter"/>
</dbReference>
<dbReference type="GO" id="GO:0019843">
    <property type="term" value="F:rRNA binding"/>
    <property type="evidence" value="ECO:0007669"/>
    <property type="project" value="UniProtKB-UniRule"/>
</dbReference>
<dbReference type="GO" id="GO:0003735">
    <property type="term" value="F:structural constituent of ribosome"/>
    <property type="evidence" value="ECO:0007669"/>
    <property type="project" value="InterPro"/>
</dbReference>
<dbReference type="GO" id="GO:0006412">
    <property type="term" value="P:translation"/>
    <property type="evidence" value="ECO:0007669"/>
    <property type="project" value="UniProtKB-UniRule"/>
</dbReference>
<dbReference type="CDD" id="cd00364">
    <property type="entry name" value="Ribosomal_uS17"/>
    <property type="match status" value="1"/>
</dbReference>
<dbReference type="FunFam" id="2.40.50.140:FF:000014">
    <property type="entry name" value="30S ribosomal protein S17"/>
    <property type="match status" value="1"/>
</dbReference>
<dbReference type="Gene3D" id="2.40.50.140">
    <property type="entry name" value="Nucleic acid-binding proteins"/>
    <property type="match status" value="1"/>
</dbReference>
<dbReference type="HAMAP" id="MF_01345_B">
    <property type="entry name" value="Ribosomal_uS17_B"/>
    <property type="match status" value="1"/>
</dbReference>
<dbReference type="InterPro" id="IPR012340">
    <property type="entry name" value="NA-bd_OB-fold"/>
</dbReference>
<dbReference type="InterPro" id="IPR000266">
    <property type="entry name" value="Ribosomal_uS17"/>
</dbReference>
<dbReference type="InterPro" id="IPR019984">
    <property type="entry name" value="Ribosomal_uS17_bact/chlr"/>
</dbReference>
<dbReference type="InterPro" id="IPR019979">
    <property type="entry name" value="Ribosomal_uS17_CS"/>
</dbReference>
<dbReference type="NCBIfam" id="NF004123">
    <property type="entry name" value="PRK05610.1"/>
    <property type="match status" value="1"/>
</dbReference>
<dbReference type="NCBIfam" id="TIGR03635">
    <property type="entry name" value="uS17_bact"/>
    <property type="match status" value="1"/>
</dbReference>
<dbReference type="PANTHER" id="PTHR10744">
    <property type="entry name" value="40S RIBOSOMAL PROTEIN S11 FAMILY MEMBER"/>
    <property type="match status" value="1"/>
</dbReference>
<dbReference type="PANTHER" id="PTHR10744:SF1">
    <property type="entry name" value="SMALL RIBOSOMAL SUBUNIT PROTEIN US17M"/>
    <property type="match status" value="1"/>
</dbReference>
<dbReference type="Pfam" id="PF00366">
    <property type="entry name" value="Ribosomal_S17"/>
    <property type="match status" value="1"/>
</dbReference>
<dbReference type="PRINTS" id="PR00973">
    <property type="entry name" value="RIBOSOMALS17"/>
</dbReference>
<dbReference type="SUPFAM" id="SSF50249">
    <property type="entry name" value="Nucleic acid-binding proteins"/>
    <property type="match status" value="1"/>
</dbReference>
<dbReference type="PROSITE" id="PS00056">
    <property type="entry name" value="RIBOSOMAL_S17"/>
    <property type="match status" value="1"/>
</dbReference>
<proteinExistence type="inferred from homology"/>
<evidence type="ECO:0000255" key="1">
    <source>
        <dbReference type="HAMAP-Rule" id="MF_01345"/>
    </source>
</evidence>
<evidence type="ECO:0000305" key="2"/>
<name>RS17_ECOLU</name>
<keyword id="KW-0687">Ribonucleoprotein</keyword>
<keyword id="KW-0689">Ribosomal protein</keyword>
<keyword id="KW-0694">RNA-binding</keyword>
<keyword id="KW-0699">rRNA-binding</keyword>
<accession>B7NDT2</accession>
<comment type="function">
    <text evidence="1">One of the primary rRNA binding proteins, it binds specifically to the 5'-end of 16S ribosomal RNA.</text>
</comment>
<comment type="subunit">
    <text evidence="1">Part of the 30S ribosomal subunit.</text>
</comment>
<comment type="similarity">
    <text evidence="1">Belongs to the universal ribosomal protein uS17 family.</text>
</comment>
<reference key="1">
    <citation type="journal article" date="2009" name="PLoS Genet.">
        <title>Organised genome dynamics in the Escherichia coli species results in highly diverse adaptive paths.</title>
        <authorList>
            <person name="Touchon M."/>
            <person name="Hoede C."/>
            <person name="Tenaillon O."/>
            <person name="Barbe V."/>
            <person name="Baeriswyl S."/>
            <person name="Bidet P."/>
            <person name="Bingen E."/>
            <person name="Bonacorsi S."/>
            <person name="Bouchier C."/>
            <person name="Bouvet O."/>
            <person name="Calteau A."/>
            <person name="Chiapello H."/>
            <person name="Clermont O."/>
            <person name="Cruveiller S."/>
            <person name="Danchin A."/>
            <person name="Diard M."/>
            <person name="Dossat C."/>
            <person name="Karoui M.E."/>
            <person name="Frapy E."/>
            <person name="Garry L."/>
            <person name="Ghigo J.M."/>
            <person name="Gilles A.M."/>
            <person name="Johnson J."/>
            <person name="Le Bouguenec C."/>
            <person name="Lescat M."/>
            <person name="Mangenot S."/>
            <person name="Martinez-Jehanne V."/>
            <person name="Matic I."/>
            <person name="Nassif X."/>
            <person name="Oztas S."/>
            <person name="Petit M.A."/>
            <person name="Pichon C."/>
            <person name="Rouy Z."/>
            <person name="Ruf C.S."/>
            <person name="Schneider D."/>
            <person name="Tourret J."/>
            <person name="Vacherie B."/>
            <person name="Vallenet D."/>
            <person name="Medigue C."/>
            <person name="Rocha E.P.C."/>
            <person name="Denamur E."/>
        </authorList>
    </citation>
    <scope>NUCLEOTIDE SEQUENCE [LARGE SCALE GENOMIC DNA]</scope>
    <source>
        <strain>UMN026 / ExPEC</strain>
    </source>
</reference>
<sequence>MTDKIRTLQGRVVSDKMEKSIVVAIERFVKHPIYGKFIKRTTKLHVHDENNECGIGDVVEIRECRPLSKTKSWTLVRVVEKAVL</sequence>
<feature type="chain" id="PRO_1000143254" description="Small ribosomal subunit protein uS17">
    <location>
        <begin position="1"/>
        <end position="84"/>
    </location>
</feature>
<gene>
    <name evidence="1" type="primary">rpsQ</name>
    <name type="ordered locus">ECUMN_3784</name>
</gene>
<organism>
    <name type="scientific">Escherichia coli O17:K52:H18 (strain UMN026 / ExPEC)</name>
    <dbReference type="NCBI Taxonomy" id="585056"/>
    <lineage>
        <taxon>Bacteria</taxon>
        <taxon>Pseudomonadati</taxon>
        <taxon>Pseudomonadota</taxon>
        <taxon>Gammaproteobacteria</taxon>
        <taxon>Enterobacterales</taxon>
        <taxon>Enterobacteriaceae</taxon>
        <taxon>Escherichia</taxon>
    </lineage>
</organism>
<protein>
    <recommendedName>
        <fullName evidence="1">Small ribosomal subunit protein uS17</fullName>
    </recommendedName>
    <alternativeName>
        <fullName evidence="2">30S ribosomal protein S17</fullName>
    </alternativeName>
</protein>